<comment type="catalytic activity">
    <reaction>
        <text>an N-acyl-L-alpha-aminoacyl-tRNA + H2O = an N-acyl-L-amino acid + a tRNA + H(+)</text>
        <dbReference type="Rhea" id="RHEA:54448"/>
        <dbReference type="Rhea" id="RHEA-COMP:10123"/>
        <dbReference type="Rhea" id="RHEA-COMP:13883"/>
        <dbReference type="ChEBI" id="CHEBI:15377"/>
        <dbReference type="ChEBI" id="CHEBI:15378"/>
        <dbReference type="ChEBI" id="CHEBI:59874"/>
        <dbReference type="ChEBI" id="CHEBI:78442"/>
        <dbReference type="ChEBI" id="CHEBI:138191"/>
        <dbReference type="EC" id="3.1.1.29"/>
    </reaction>
</comment>
<comment type="similarity">
    <text evidence="1">Belongs to the PTH2 family.</text>
</comment>
<organism>
    <name type="scientific">Fowlpox virus (strain NVSL)</name>
    <name type="common">FPV</name>
    <dbReference type="NCBI Taxonomy" id="928301"/>
    <lineage>
        <taxon>Viruses</taxon>
        <taxon>Varidnaviria</taxon>
        <taxon>Bamfordvirae</taxon>
        <taxon>Nucleocytoviricota</taxon>
        <taxon>Pokkesviricetes</taxon>
        <taxon>Chitovirales</taxon>
        <taxon>Poxviridae</taxon>
        <taxon>Chordopoxvirinae</taxon>
        <taxon>Avipoxvirus</taxon>
        <taxon>Fowlpox virus</taxon>
    </lineage>
</organism>
<evidence type="ECO:0000305" key="1"/>
<reference key="1">
    <citation type="journal article" date="2000" name="J. Virol.">
        <title>The genome of fowlpox virus.</title>
        <authorList>
            <person name="Afonso C.L."/>
            <person name="Tulman E.R."/>
            <person name="Lu Z."/>
            <person name="Zsak L."/>
            <person name="Kutish G.F."/>
            <person name="Rock D.L."/>
        </authorList>
    </citation>
    <scope>NUCLEOTIDE SEQUENCE [LARGE SCALE GENOMIC DNA]</scope>
</reference>
<organismHost>
    <name type="scientific">Vertebrata</name>
    <dbReference type="NCBI Taxonomy" id="7742"/>
</organismHost>
<name>V029_FOWPN</name>
<sequence>MANVFDNSSYRDMLKMVFVIRDDLKMTKGEIVSQCCHGAISAYEKSKKYSPDYLKRWLKNGQVKETVKVDNENEMMDIRENATAIGVNYYIVQNDKRQKCNTVLVIGPAPNYMFESLTRSLKPL</sequence>
<accession>Q9J5H2</accession>
<protein>
    <recommendedName>
        <fullName>Putative peptidyl-tRNA hydrolase</fullName>
        <shortName>PTH</shortName>
        <ecNumber>3.1.1.29</ecNumber>
    </recommendedName>
</protein>
<gene>
    <name type="ordered locus">FPV029</name>
</gene>
<proteinExistence type="inferred from homology"/>
<feature type="chain" id="PRO_0000120286" description="Putative peptidyl-tRNA hydrolase">
    <location>
        <begin position="1"/>
        <end position="124"/>
    </location>
</feature>
<dbReference type="EC" id="3.1.1.29"/>
<dbReference type="EMBL" id="AF198100">
    <property type="protein sequence ID" value="AAF44373.1"/>
    <property type="molecule type" value="Genomic_DNA"/>
</dbReference>
<dbReference type="RefSeq" id="NP_038992.1">
    <property type="nucleotide sequence ID" value="NC_002188.1"/>
</dbReference>
<dbReference type="SMR" id="Q9J5H2"/>
<dbReference type="GeneID" id="1486748"/>
<dbReference type="KEGG" id="vg:1486748"/>
<dbReference type="Proteomes" id="UP000008597">
    <property type="component" value="Segment"/>
</dbReference>
<dbReference type="GO" id="GO:0004045">
    <property type="term" value="F:peptidyl-tRNA hydrolase activity"/>
    <property type="evidence" value="ECO:0007669"/>
    <property type="project" value="UniProtKB-EC"/>
</dbReference>
<dbReference type="FunFam" id="3.40.1490.10:FF:000002">
    <property type="entry name" value="Peptidyl-tRNA hydrolase 2, mitochondrial"/>
    <property type="match status" value="1"/>
</dbReference>
<dbReference type="Gene3D" id="3.40.1490.10">
    <property type="entry name" value="Bit1"/>
    <property type="match status" value="1"/>
</dbReference>
<dbReference type="InterPro" id="IPR023476">
    <property type="entry name" value="Pep_tRNA_hydro_II_dom_sf"/>
</dbReference>
<dbReference type="InterPro" id="IPR002833">
    <property type="entry name" value="PTH2"/>
</dbReference>
<dbReference type="NCBIfam" id="TIGR00283">
    <property type="entry name" value="arch_pth2"/>
    <property type="match status" value="1"/>
</dbReference>
<dbReference type="PANTHER" id="PTHR12649">
    <property type="entry name" value="PEPTIDYL-TRNA HYDROLASE 2"/>
    <property type="match status" value="1"/>
</dbReference>
<dbReference type="PANTHER" id="PTHR12649:SF11">
    <property type="entry name" value="PEPTIDYL-TRNA HYDROLASE 2, MITOCHONDRIAL"/>
    <property type="match status" value="1"/>
</dbReference>
<dbReference type="Pfam" id="PF01981">
    <property type="entry name" value="PTH2"/>
    <property type="match status" value="1"/>
</dbReference>
<dbReference type="SUPFAM" id="SSF102462">
    <property type="entry name" value="Peptidyl-tRNA hydrolase II"/>
    <property type="match status" value="1"/>
</dbReference>
<keyword id="KW-0378">Hydrolase</keyword>
<keyword id="KW-1185">Reference proteome</keyword>